<feature type="chain" id="PRO_0000169172" description="Inactive recombination-promoting nuclease-like protein RpnE">
    <location>
        <begin position="1"/>
        <end position="299"/>
    </location>
</feature>
<feature type="sequence conflict" description="In Ref. 4; AAA83867." evidence="2" ref="4">
    <original>S</original>
    <variation>C</variation>
    <location>
        <position position="86"/>
    </location>
</feature>
<keyword id="KW-1185">Reference proteome</keyword>
<reference key="1">
    <citation type="journal article" date="1997" name="DNA Res.">
        <title>Construction of a contiguous 874-kb sequence of the Escherichia coli-K12 genome corresponding to 50.0-68.8 min on the linkage map and analysis of its sequence features.</title>
        <authorList>
            <person name="Yamamoto Y."/>
            <person name="Aiba H."/>
            <person name="Baba T."/>
            <person name="Hayashi K."/>
            <person name="Inada T."/>
            <person name="Isono K."/>
            <person name="Itoh T."/>
            <person name="Kimura S."/>
            <person name="Kitagawa M."/>
            <person name="Makino K."/>
            <person name="Miki T."/>
            <person name="Mitsuhashi N."/>
            <person name="Mizobuchi K."/>
            <person name="Mori H."/>
            <person name="Nakade S."/>
            <person name="Nakamura Y."/>
            <person name="Nashimoto H."/>
            <person name="Oshima T."/>
            <person name="Oyama S."/>
            <person name="Saito N."/>
            <person name="Sampei G."/>
            <person name="Satoh Y."/>
            <person name="Sivasundaram S."/>
            <person name="Tagami H."/>
            <person name="Takahashi H."/>
            <person name="Takeda J."/>
            <person name="Takemoto K."/>
            <person name="Uehara K."/>
            <person name="Wada C."/>
            <person name="Yamagata S."/>
            <person name="Horiuchi T."/>
        </authorList>
    </citation>
    <scope>NUCLEOTIDE SEQUENCE [LARGE SCALE GENOMIC DNA]</scope>
    <source>
        <strain>K12 / W3110 / ATCC 27325 / DSM 5911</strain>
    </source>
</reference>
<reference key="2">
    <citation type="journal article" date="1997" name="Science">
        <title>The complete genome sequence of Escherichia coli K-12.</title>
        <authorList>
            <person name="Blattner F.R."/>
            <person name="Plunkett G. III"/>
            <person name="Bloch C.A."/>
            <person name="Perna N.T."/>
            <person name="Burland V."/>
            <person name="Riley M."/>
            <person name="Collado-Vides J."/>
            <person name="Glasner J.D."/>
            <person name="Rode C.K."/>
            <person name="Mayhew G.F."/>
            <person name="Gregor J."/>
            <person name="Davis N.W."/>
            <person name="Kirkpatrick H.A."/>
            <person name="Goeden M.A."/>
            <person name="Rose D.J."/>
            <person name="Mau B."/>
            <person name="Shao Y."/>
        </authorList>
    </citation>
    <scope>NUCLEOTIDE SEQUENCE [LARGE SCALE GENOMIC DNA]</scope>
    <source>
        <strain>K12 / MG1655 / ATCC 47076</strain>
    </source>
</reference>
<reference key="3">
    <citation type="journal article" date="2006" name="Mol. Syst. Biol.">
        <title>Highly accurate genome sequences of Escherichia coli K-12 strains MG1655 and W3110.</title>
        <authorList>
            <person name="Hayashi K."/>
            <person name="Morooka N."/>
            <person name="Yamamoto Y."/>
            <person name="Fujita K."/>
            <person name="Isono K."/>
            <person name="Choi S."/>
            <person name="Ohtsubo E."/>
            <person name="Baba T."/>
            <person name="Wanner B.L."/>
            <person name="Mori H."/>
            <person name="Horiuchi T."/>
        </authorList>
    </citation>
    <scope>NUCLEOTIDE SEQUENCE [LARGE SCALE GENOMIC DNA]</scope>
    <source>
        <strain>K12 / W3110 / ATCC 27325 / DSM 5911</strain>
    </source>
</reference>
<reference key="4">
    <citation type="journal article" date="1988" name="J. Bacteriol.">
        <title>Nucleotide sequence and gene-polypeptide relationships of the glpABC operon encoding the anaerobic sn-glycerol-3-phosphate dehydrogenase of Escherichia coli K-12.</title>
        <authorList>
            <person name="Cole S.T."/>
            <person name="Eiglmeier K."/>
            <person name="Ahmed S."/>
            <person name="Honore N."/>
            <person name="Elmes L."/>
            <person name="Anderson W.F."/>
            <person name="Weiner J.H."/>
        </authorList>
    </citation>
    <scope>NUCLEOTIDE SEQUENCE [GENOMIC DNA] OF 1-86</scope>
    <source>
        <strain>K12</strain>
    </source>
</reference>
<reference key="5">
    <citation type="journal article" date="1994" name="Nucleic Acids Res.">
        <title>Intrinsic and extrinsic approaches for detecting genes in a bacterial genome.</title>
        <authorList>
            <person name="Borodovsky M."/>
            <person name="Rudd K.E."/>
            <person name="Koonin E.V."/>
        </authorList>
    </citation>
    <scope>IDENTIFICATION</scope>
</reference>
<reference key="6">
    <citation type="journal article" date="2017" name="J. Bacteriol.">
        <title>The Rpn (YhgA-like) proteins of Escherichia coli K-12 and their contribution to RecA-independent horizontal transfer.</title>
        <authorList>
            <person name="Kingston A.W."/>
            <person name="Ponkratz C."/>
            <person name="Raleigh E.A."/>
        </authorList>
    </citation>
    <scope>LACK OF FUNCTION</scope>
    <source>
        <strain>K12</strain>
    </source>
</reference>
<proteinExistence type="inferred from homology"/>
<protein>
    <recommendedName>
        <fullName>Inactive recombination-promoting nuclease-like protein RpnE</fullName>
    </recommendedName>
</protein>
<comment type="function">
    <text evidence="1">Upon expression has no effect on RecA-independent DNA recombination, cell viability or DNA damage (PubMed:28096446).</text>
</comment>
<comment type="similarity">
    <text evidence="2">Belongs to the Rpn/YhgA-like nuclease family.</text>
</comment>
<sequence length="299" mass="34923">MTESTTSSPHDAVFKTFMFTPETARDFLEIHLPEPLRKLCNLQTLRLEPTSFIEKSLRAYYSDVLWSVETSDGDGYIYCVIEHQSSAEKNMAFRLMRYATAAMQRHQDKGYDRVPLVVPLLFYHGETSPYPYSLNWLDEFDDPQLARQLYTEAFLLVDITIVPDDEIMQHRRIALLELIQKHIRDRDLIGMVDRITTLLVRGFTNDSQLQTLFNYLLQCGDTSRFTRFIEEIAERSPLQKERLMTIAERLRQEGHQIGWQEGMHEQAIKIALRMLEQGFEREIVLATTQLTDADIPNCH</sequence>
<accession>P37014</accession>
<accession>P77771</accession>
<gene>
    <name type="primary">yfaD</name>
    <name type="ordered locus">b2244</name>
    <name type="ordered locus">JW2238</name>
</gene>
<evidence type="ECO:0000269" key="1">
    <source>
    </source>
</evidence>
<evidence type="ECO:0000305" key="2"/>
<name>RPNE_ECOLI</name>
<organism>
    <name type="scientific">Escherichia coli (strain K12)</name>
    <dbReference type="NCBI Taxonomy" id="83333"/>
    <lineage>
        <taxon>Bacteria</taxon>
        <taxon>Pseudomonadati</taxon>
        <taxon>Pseudomonadota</taxon>
        <taxon>Gammaproteobacteria</taxon>
        <taxon>Enterobacterales</taxon>
        <taxon>Enterobacteriaceae</taxon>
        <taxon>Escherichia</taxon>
    </lineage>
</organism>
<dbReference type="EMBL" id="U00096">
    <property type="protein sequence ID" value="AAC75304.1"/>
    <property type="molecule type" value="Genomic_DNA"/>
</dbReference>
<dbReference type="EMBL" id="AP009048">
    <property type="protein sequence ID" value="BAA16063.1"/>
    <property type="molecule type" value="Genomic_DNA"/>
</dbReference>
<dbReference type="EMBL" id="M20938">
    <property type="protein sequence ID" value="AAA83867.1"/>
    <property type="molecule type" value="Genomic_DNA"/>
</dbReference>
<dbReference type="PIR" id="B64995">
    <property type="entry name" value="B64995"/>
</dbReference>
<dbReference type="RefSeq" id="NP_416747.1">
    <property type="nucleotide sequence ID" value="NC_000913.3"/>
</dbReference>
<dbReference type="RefSeq" id="WP_000140592.1">
    <property type="nucleotide sequence ID" value="NZ_LN832404.1"/>
</dbReference>
<dbReference type="SMR" id="P37014"/>
<dbReference type="BioGRID" id="4262943">
    <property type="interactions" value="12"/>
</dbReference>
<dbReference type="FunCoup" id="P37014">
    <property type="interactions" value="97"/>
</dbReference>
<dbReference type="IntAct" id="P37014">
    <property type="interactions" value="3"/>
</dbReference>
<dbReference type="STRING" id="511145.b2244"/>
<dbReference type="PaxDb" id="511145-b2244"/>
<dbReference type="EnsemblBacteria" id="AAC75304">
    <property type="protein sequence ID" value="AAC75304"/>
    <property type="gene ID" value="b2244"/>
</dbReference>
<dbReference type="GeneID" id="946737"/>
<dbReference type="KEGG" id="ecj:JW2238"/>
<dbReference type="KEGG" id="eco:b2244"/>
<dbReference type="KEGG" id="ecoc:C3026_12535"/>
<dbReference type="PATRIC" id="fig|511145.12.peg.2334"/>
<dbReference type="EchoBASE" id="EB2228"/>
<dbReference type="eggNOG" id="COG5464">
    <property type="taxonomic scope" value="Bacteria"/>
</dbReference>
<dbReference type="HOGENOM" id="CLU_059548_1_0_6"/>
<dbReference type="InParanoid" id="P37014"/>
<dbReference type="OMA" id="KTFMFSP"/>
<dbReference type="OrthoDB" id="6532193at2"/>
<dbReference type="PhylomeDB" id="P37014"/>
<dbReference type="BioCyc" id="EcoCyc:EG12323-MONOMER"/>
<dbReference type="PRO" id="PR:P37014"/>
<dbReference type="Proteomes" id="UP000000625">
    <property type="component" value="Chromosome"/>
</dbReference>
<dbReference type="GO" id="GO:1990238">
    <property type="term" value="F:double-stranded DNA endonuclease activity"/>
    <property type="evidence" value="ECO:0000318"/>
    <property type="project" value="GO_Central"/>
</dbReference>
<dbReference type="GO" id="GO:0006310">
    <property type="term" value="P:DNA recombination"/>
    <property type="evidence" value="ECO:0000318"/>
    <property type="project" value="GO_Central"/>
</dbReference>
<dbReference type="InterPro" id="IPR051699">
    <property type="entry name" value="Rpn/YhgA-like_nuclease"/>
</dbReference>
<dbReference type="InterPro" id="IPR010106">
    <property type="entry name" value="RpnA"/>
</dbReference>
<dbReference type="InterPro" id="IPR006842">
    <property type="entry name" value="Transposase_31"/>
</dbReference>
<dbReference type="NCBIfam" id="NF007418">
    <property type="entry name" value="PRK09956.1"/>
    <property type="match status" value="1"/>
</dbReference>
<dbReference type="NCBIfam" id="TIGR01784">
    <property type="entry name" value="T_den_put_tspse"/>
    <property type="match status" value="1"/>
</dbReference>
<dbReference type="PANTHER" id="PTHR34611">
    <property type="match status" value="1"/>
</dbReference>
<dbReference type="PANTHER" id="PTHR34611:SF2">
    <property type="entry name" value="INACTIVE RECOMBINATION-PROMOTING NUCLEASE-LIKE PROTEIN RPNE-RELATED"/>
    <property type="match status" value="1"/>
</dbReference>
<dbReference type="Pfam" id="PF04754">
    <property type="entry name" value="Transposase_31"/>
    <property type="match status" value="1"/>
</dbReference>